<gene>
    <name evidence="1" type="primary">rpoC2</name>
    <name type="ordered locus">tll0640</name>
</gene>
<dbReference type="EC" id="2.7.7.6" evidence="1"/>
<dbReference type="EMBL" id="BA000039">
    <property type="protein sequence ID" value="BAC08191.1"/>
    <property type="molecule type" value="Genomic_DNA"/>
</dbReference>
<dbReference type="RefSeq" id="NP_681429.1">
    <property type="nucleotide sequence ID" value="NC_004113.1"/>
</dbReference>
<dbReference type="RefSeq" id="WP_011056487.1">
    <property type="nucleotide sequence ID" value="NC_004113.1"/>
</dbReference>
<dbReference type="PDB" id="8EMB">
    <property type="method" value="X-ray"/>
    <property type="resolution" value="3.06 A"/>
    <property type="chains" value="A/B/C/D/E/F=435-983"/>
</dbReference>
<dbReference type="PDBsum" id="8EMB"/>
<dbReference type="SMR" id="Q8DL57"/>
<dbReference type="STRING" id="197221.gene:10747230"/>
<dbReference type="EnsemblBacteria" id="BAC08191">
    <property type="protein sequence ID" value="BAC08191"/>
    <property type="gene ID" value="BAC08191"/>
</dbReference>
<dbReference type="KEGG" id="tel:tll0640"/>
<dbReference type="PATRIC" id="fig|197221.4.peg.679"/>
<dbReference type="eggNOG" id="COG0086">
    <property type="taxonomic scope" value="Bacteria"/>
</dbReference>
<dbReference type="Proteomes" id="UP000000440">
    <property type="component" value="Chromosome"/>
</dbReference>
<dbReference type="GO" id="GO:0000428">
    <property type="term" value="C:DNA-directed RNA polymerase complex"/>
    <property type="evidence" value="ECO:0007669"/>
    <property type="project" value="UniProtKB-KW"/>
</dbReference>
<dbReference type="GO" id="GO:0003677">
    <property type="term" value="F:DNA binding"/>
    <property type="evidence" value="ECO:0007669"/>
    <property type="project" value="UniProtKB-UniRule"/>
</dbReference>
<dbReference type="GO" id="GO:0003899">
    <property type="term" value="F:DNA-directed RNA polymerase activity"/>
    <property type="evidence" value="ECO:0007669"/>
    <property type="project" value="UniProtKB-UniRule"/>
</dbReference>
<dbReference type="GO" id="GO:0008270">
    <property type="term" value="F:zinc ion binding"/>
    <property type="evidence" value="ECO:0007669"/>
    <property type="project" value="UniProtKB-UniRule"/>
</dbReference>
<dbReference type="GO" id="GO:0006351">
    <property type="term" value="P:DNA-templated transcription"/>
    <property type="evidence" value="ECO:0007669"/>
    <property type="project" value="UniProtKB-UniRule"/>
</dbReference>
<dbReference type="CDD" id="cd02655">
    <property type="entry name" value="RNAP_beta'_C"/>
    <property type="match status" value="1"/>
</dbReference>
<dbReference type="FunFam" id="1.10.150.390:FF:000002">
    <property type="entry name" value="DNA-directed RNA polymerase subunit beta"/>
    <property type="match status" value="1"/>
</dbReference>
<dbReference type="Gene3D" id="1.10.132.30">
    <property type="match status" value="1"/>
</dbReference>
<dbReference type="Gene3D" id="1.10.150.390">
    <property type="match status" value="1"/>
</dbReference>
<dbReference type="Gene3D" id="1.10.1790.20">
    <property type="match status" value="1"/>
</dbReference>
<dbReference type="Gene3D" id="2.40.50.100">
    <property type="match status" value="3"/>
</dbReference>
<dbReference type="Gene3D" id="1.10.274.100">
    <property type="entry name" value="RNA polymerase Rpb1, domain 3"/>
    <property type="match status" value="1"/>
</dbReference>
<dbReference type="HAMAP" id="MF_01324">
    <property type="entry name" value="RNApol_bact_RpoC2"/>
    <property type="match status" value="1"/>
</dbReference>
<dbReference type="InterPro" id="IPR012756">
    <property type="entry name" value="DNA-dir_RpoC2_beta_pp"/>
</dbReference>
<dbReference type="InterPro" id="IPR045867">
    <property type="entry name" value="DNA-dir_RpoC_beta_prime"/>
</dbReference>
<dbReference type="InterPro" id="IPR007066">
    <property type="entry name" value="RNA_pol_Rpb1_3"/>
</dbReference>
<dbReference type="InterPro" id="IPR042102">
    <property type="entry name" value="RNA_pol_Rpb1_3_sf"/>
</dbReference>
<dbReference type="InterPro" id="IPR007083">
    <property type="entry name" value="RNA_pol_Rpb1_4"/>
</dbReference>
<dbReference type="InterPro" id="IPR007081">
    <property type="entry name" value="RNA_pol_Rpb1_5"/>
</dbReference>
<dbReference type="InterPro" id="IPR038120">
    <property type="entry name" value="Rpb1_funnel_sf"/>
</dbReference>
<dbReference type="NCBIfam" id="NF002724">
    <property type="entry name" value="PRK02597.1"/>
    <property type="match status" value="1"/>
</dbReference>
<dbReference type="NCBIfam" id="TIGR02388">
    <property type="entry name" value="rpoC2_cyan"/>
    <property type="match status" value="1"/>
</dbReference>
<dbReference type="PANTHER" id="PTHR19376">
    <property type="entry name" value="DNA-DIRECTED RNA POLYMERASE"/>
    <property type="match status" value="1"/>
</dbReference>
<dbReference type="PANTHER" id="PTHR19376:SF68">
    <property type="entry name" value="DNA-DIRECTED RNA POLYMERASE SUBUNIT BETA"/>
    <property type="match status" value="1"/>
</dbReference>
<dbReference type="Pfam" id="PF04983">
    <property type="entry name" value="RNA_pol_Rpb1_3"/>
    <property type="match status" value="1"/>
</dbReference>
<dbReference type="Pfam" id="PF05000">
    <property type="entry name" value="RNA_pol_Rpb1_4"/>
    <property type="match status" value="1"/>
</dbReference>
<dbReference type="Pfam" id="PF04998">
    <property type="entry name" value="RNA_pol_Rpb1_5"/>
    <property type="match status" value="1"/>
</dbReference>
<dbReference type="SUPFAM" id="SSF64484">
    <property type="entry name" value="beta and beta-prime subunits of DNA dependent RNA-polymerase"/>
    <property type="match status" value="1"/>
</dbReference>
<accession>Q8DL57</accession>
<comment type="function">
    <text evidence="1">DNA-dependent RNA polymerase catalyzes the transcription of DNA into RNA using the four ribonucleoside triphosphates as substrates.</text>
</comment>
<comment type="catalytic activity">
    <reaction evidence="1">
        <text>RNA(n) + a ribonucleoside 5'-triphosphate = RNA(n+1) + diphosphate</text>
        <dbReference type="Rhea" id="RHEA:21248"/>
        <dbReference type="Rhea" id="RHEA-COMP:14527"/>
        <dbReference type="Rhea" id="RHEA-COMP:17342"/>
        <dbReference type="ChEBI" id="CHEBI:33019"/>
        <dbReference type="ChEBI" id="CHEBI:61557"/>
        <dbReference type="ChEBI" id="CHEBI:140395"/>
        <dbReference type="EC" id="2.7.7.6"/>
    </reaction>
</comment>
<comment type="cofactor">
    <cofactor evidence="1">
        <name>Zn(2+)</name>
        <dbReference type="ChEBI" id="CHEBI:29105"/>
    </cofactor>
    <text evidence="1">Binds 1 Zn(2+) ion per subunit.</text>
</comment>
<comment type="subunit">
    <text evidence="1">In cyanobacteria the RNAP catalytic core is composed of 2 alpha, 1 beta, 1 beta', 1 gamma and 1 omega subunit. When a sigma factor is associated with the core the holoenzyme is formed, which can initiate transcription.</text>
</comment>
<comment type="similarity">
    <text evidence="1">Belongs to the RNA polymerase beta' chain family. RpoC2 subfamily.</text>
</comment>
<keyword id="KW-0002">3D-structure</keyword>
<keyword id="KW-0240">DNA-directed RNA polymerase</keyword>
<keyword id="KW-0479">Metal-binding</keyword>
<keyword id="KW-0548">Nucleotidyltransferase</keyword>
<keyword id="KW-1185">Reference proteome</keyword>
<keyword id="KW-0804">Transcription</keyword>
<keyword id="KW-0808">Transferase</keyword>
<keyword id="KW-0862">Zinc</keyword>
<proteinExistence type="evidence at protein level"/>
<sequence>MTEKKPIFFNRIIDKKGLRDLIAWSFSNFGTARTAEMADKIKDLGFHYATRAGVSISVDDLLVPPKKQELLEAAEKEIKTAQERYSRGEITEVERFQKVIDTWNSTNEELKNEVVRHFRNTDVLNSVYMMAFSGARGNLSQVRQLVGMRGLMANPQGEIIDLPIKTNFREGLTVTEYIISSYGARKGLVDTALRTADSGYLTRRLVDVSQDVIIREEDCETERGITLRSMTVGDKVLALQDRLLGRVVLNDVRHPQTGEVLVAKNQAISADLAKKIVDAGIEEVVVRSPLTCEATGSVCRLCYGWSLAHARLVDMGEAVGIIAAQSIGEPGTQLTMRTFHTGGVFTGEVARQERAPFAGTVEYGKKLRVRPYRTRHGDDAFIVETAGKLVVKGGQQRQEFDLSQGSIVLVADGETVAAGQLLAEVAQAARSVRKATEKVTKDVASDLAGQVKFVNLDAEEKRDRQGTTTRIAPKGGLIWVLSGEVYNLPPGAEPVVKNGDRIEAGAVLAETTVKTEHGGVVRLPEQQDSKGGREVEIITASVMLDKAKVLKETQQGREHYIIETATGQRFSLKAAPGTKVANGQVVAELIDDRYHTTTGGILKYADIEVAKKGKAKQGYEVLKGGTLLWIPEETHEVNKDISLLMVEDNQYVEAGTEVVKDIFCQNSGVVEVIQKNDILREIIIKPGELHLVDDPEAARLKHGTLARPGEEVLPGLVVDTLSQVDYLEDTPEGPAILLRPVQEFSVPDEPSVPSQDSSDGSGQSIRLRAVQRLPYKHDERVKSVDGVDLLRTQLVLEIGSEAPQLAADIEIVTDEVDPEAQRLQLVILESLIIRRDIAADQTQGSTFTSLLVKDGDHIGPGAVIARTDIKAKQAGEVQGIVRSGESVRRILVVTDSDRLRVETNGAKPTVKVGDLVRPGDELAKGVTAPETAAVMAVADDHVILRLARPYLVSPGAVLQIEEGDLVQRGDNLALLVFERAKTGDIIQGLPRIEELLEARHPKEKCVLAVRPGTCQVTYNSDDSVEIKVIEEDGTIQEYPVLPGQNPLVVDGQKVNLADPLTDGPVDPHDILSIYFEYYKPQGLLKAAQTSLEKVQSFLVNEVQSVYLSQGIEIADKHIEVIVRQMTSKVRIDDAGDTILLSGELMTLRQAEQANEPMALTGGAPAQYTPVLLGITKASLNTDSFISAASFQETTRVLTEAAIEGKSDWLRGLKENVIIGRLIPAGTGFNSYEESSNGDEEWEEGEDRLGQTHVISPEPESPKMTVNVTADLGEDVLIDDETAPHVIEKITGGARDFEFASSDVEEDELTEEDDDYGDEEEEDAF</sequence>
<name>RPOC2_THEVB</name>
<feature type="chain" id="PRO_0000067908" description="DNA-directed RNA polymerase subunit beta'">
    <location>
        <begin position="1"/>
        <end position="1324"/>
    </location>
</feature>
<feature type="region of interest" description="Disordered" evidence="2">
    <location>
        <begin position="1293"/>
        <end position="1324"/>
    </location>
</feature>
<feature type="compositionally biased region" description="Acidic residues" evidence="2">
    <location>
        <begin position="1302"/>
        <end position="1324"/>
    </location>
</feature>
<feature type="binding site" evidence="1">
    <location>
        <position position="219"/>
    </location>
    <ligand>
        <name>Zn(2+)</name>
        <dbReference type="ChEBI" id="CHEBI:29105"/>
    </ligand>
</feature>
<feature type="binding site" evidence="1">
    <location>
        <position position="292"/>
    </location>
    <ligand>
        <name>Zn(2+)</name>
        <dbReference type="ChEBI" id="CHEBI:29105"/>
    </ligand>
</feature>
<feature type="binding site" evidence="1">
    <location>
        <position position="299"/>
    </location>
    <ligand>
        <name>Zn(2+)</name>
        <dbReference type="ChEBI" id="CHEBI:29105"/>
    </ligand>
</feature>
<feature type="binding site" evidence="1">
    <location>
        <position position="302"/>
    </location>
    <ligand>
        <name>Zn(2+)</name>
        <dbReference type="ChEBI" id="CHEBI:29105"/>
    </ligand>
</feature>
<feature type="strand" evidence="3">
    <location>
        <begin position="436"/>
        <end position="444"/>
    </location>
</feature>
<feature type="strand" evidence="3">
    <location>
        <begin position="449"/>
        <end position="455"/>
    </location>
</feature>
<feature type="strand" evidence="3">
    <location>
        <begin position="459"/>
        <end position="462"/>
    </location>
</feature>
<feature type="strand" evidence="3">
    <location>
        <begin position="464"/>
        <end position="466"/>
    </location>
</feature>
<feature type="strand" evidence="3">
    <location>
        <begin position="468"/>
        <end position="474"/>
    </location>
</feature>
<feature type="strand" evidence="3">
    <location>
        <begin position="476"/>
        <end position="482"/>
    </location>
</feature>
<feature type="strand" evidence="3">
    <location>
        <begin position="484"/>
        <end position="487"/>
    </location>
</feature>
<feature type="strand" evidence="3">
    <location>
        <begin position="507"/>
        <end position="514"/>
    </location>
</feature>
<feature type="strand" evidence="3">
    <location>
        <begin position="520"/>
        <end position="522"/>
    </location>
</feature>
<feature type="strand" evidence="3">
    <location>
        <begin position="532"/>
        <end position="543"/>
    </location>
</feature>
<feature type="strand" evidence="3">
    <location>
        <begin position="547"/>
        <end position="552"/>
    </location>
</feature>
<feature type="strand" evidence="3">
    <location>
        <begin position="555"/>
        <end position="557"/>
    </location>
</feature>
<feature type="strand" evidence="3">
    <location>
        <begin position="559"/>
        <end position="564"/>
    </location>
</feature>
<feature type="strand" evidence="3">
    <location>
        <begin position="569"/>
        <end position="572"/>
    </location>
</feature>
<feature type="strand" evidence="3">
    <location>
        <begin position="579"/>
        <end position="581"/>
    </location>
</feature>
<feature type="strand" evidence="3">
    <location>
        <begin position="585"/>
        <end position="589"/>
    </location>
</feature>
<feature type="strand" evidence="3">
    <location>
        <begin position="600"/>
        <end position="606"/>
    </location>
</feature>
<feature type="helix" evidence="3">
    <location>
        <begin position="614"/>
        <end position="616"/>
    </location>
</feature>
<feature type="strand" evidence="3">
    <location>
        <begin position="617"/>
        <end position="623"/>
    </location>
</feature>
<feature type="strand" evidence="3">
    <location>
        <begin position="625"/>
        <end position="631"/>
    </location>
</feature>
<feature type="strand" evidence="3">
    <location>
        <begin position="633"/>
        <end position="636"/>
    </location>
</feature>
<feature type="strand" evidence="3">
    <location>
        <begin position="650"/>
        <end position="652"/>
    </location>
</feature>
<feature type="strand" evidence="3">
    <location>
        <begin position="654"/>
        <end position="656"/>
    </location>
</feature>
<feature type="strand" evidence="3">
    <location>
        <begin position="658"/>
        <end position="661"/>
    </location>
</feature>
<feature type="strand" evidence="3">
    <location>
        <begin position="668"/>
        <end position="685"/>
    </location>
</feature>
<feature type="strand" evidence="3">
    <location>
        <begin position="687"/>
        <end position="691"/>
    </location>
</feature>
<feature type="helix" evidence="3">
    <location>
        <begin position="695"/>
        <end position="697"/>
    </location>
</feature>
<feature type="strand" evidence="3">
    <location>
        <begin position="698"/>
        <end position="700"/>
    </location>
</feature>
<feature type="strand" evidence="3">
    <location>
        <begin position="711"/>
        <end position="713"/>
    </location>
</feature>
<feature type="strand" evidence="3">
    <location>
        <begin position="719"/>
        <end position="727"/>
    </location>
</feature>
<feature type="strand" evidence="3">
    <location>
        <begin position="735"/>
        <end position="740"/>
    </location>
</feature>
<feature type="strand" evidence="3">
    <location>
        <begin position="742"/>
        <end position="746"/>
    </location>
</feature>
<feature type="strand" evidence="3">
    <location>
        <begin position="756"/>
        <end position="758"/>
    </location>
</feature>
<feature type="strand" evidence="3">
    <location>
        <begin position="766"/>
        <end position="773"/>
    </location>
</feature>
<feature type="strand" evidence="3">
    <location>
        <begin position="791"/>
        <end position="797"/>
    </location>
</feature>
<feature type="strand" evidence="3">
    <location>
        <begin position="807"/>
        <end position="814"/>
    </location>
</feature>
<feature type="strand" evidence="3">
    <location>
        <begin position="816"/>
        <end position="833"/>
    </location>
</feature>
<feature type="strand" evidence="3">
    <location>
        <begin position="841"/>
        <end position="843"/>
    </location>
</feature>
<feature type="strand" evidence="3">
    <location>
        <begin position="846"/>
        <end position="850"/>
    </location>
</feature>
<feature type="strand" evidence="3">
    <location>
        <begin position="863"/>
        <end position="870"/>
    </location>
</feature>
<feature type="strand" evidence="3">
    <location>
        <begin position="875"/>
        <end position="878"/>
    </location>
</feature>
<feature type="strand" evidence="3">
    <location>
        <begin position="882"/>
        <end position="885"/>
    </location>
</feature>
<feature type="strand" evidence="3">
    <location>
        <begin position="889"/>
        <end position="893"/>
    </location>
</feature>
<feature type="turn" evidence="3">
    <location>
        <begin position="895"/>
        <end position="897"/>
    </location>
</feature>
<feature type="strand" evidence="3">
    <location>
        <begin position="898"/>
        <end position="902"/>
    </location>
</feature>
<feature type="strand" evidence="3">
    <location>
        <begin position="904"/>
        <end position="906"/>
    </location>
</feature>
<feature type="strand" evidence="3">
    <location>
        <begin position="921"/>
        <end position="923"/>
    </location>
</feature>
<feature type="strand" evidence="3">
    <location>
        <begin position="929"/>
        <end position="937"/>
    </location>
</feature>
<feature type="strand" evidence="3">
    <location>
        <begin position="939"/>
        <end position="952"/>
    </location>
</feature>
<feature type="strand" evidence="3">
    <location>
        <begin position="956"/>
        <end position="958"/>
    </location>
</feature>
<feature type="strand" evidence="3">
    <location>
        <begin position="971"/>
        <end position="980"/>
    </location>
</feature>
<organism>
    <name type="scientific">Thermosynechococcus vestitus (strain NIES-2133 / IAM M-273 / BP-1)</name>
    <dbReference type="NCBI Taxonomy" id="197221"/>
    <lineage>
        <taxon>Bacteria</taxon>
        <taxon>Bacillati</taxon>
        <taxon>Cyanobacteriota</taxon>
        <taxon>Cyanophyceae</taxon>
        <taxon>Acaryochloridales</taxon>
        <taxon>Thermosynechococcaceae</taxon>
        <taxon>Thermosynechococcus</taxon>
    </lineage>
</organism>
<protein>
    <recommendedName>
        <fullName evidence="1">DNA-directed RNA polymerase subunit beta'</fullName>
        <shortName evidence="1">RNAP subunit beta'</shortName>
        <ecNumber evidence="1">2.7.7.6</ecNumber>
    </recommendedName>
    <alternativeName>
        <fullName evidence="1">RNA polymerase subunit beta'</fullName>
    </alternativeName>
    <alternativeName>
        <fullName evidence="1">Transcriptase subunit beta'</fullName>
    </alternativeName>
</protein>
<reference key="1">
    <citation type="journal article" date="2002" name="DNA Res.">
        <title>Complete genome structure of the thermophilic cyanobacterium Thermosynechococcus elongatus BP-1.</title>
        <authorList>
            <person name="Nakamura Y."/>
            <person name="Kaneko T."/>
            <person name="Sato S."/>
            <person name="Ikeuchi M."/>
            <person name="Katoh H."/>
            <person name="Sasamoto S."/>
            <person name="Watanabe A."/>
            <person name="Iriguchi M."/>
            <person name="Kawashima K."/>
            <person name="Kimura T."/>
            <person name="Kishida Y."/>
            <person name="Kiyokawa C."/>
            <person name="Kohara M."/>
            <person name="Matsumoto M."/>
            <person name="Matsuno A."/>
            <person name="Nakazaki N."/>
            <person name="Shimpo S."/>
            <person name="Sugimoto M."/>
            <person name="Takeuchi C."/>
            <person name="Yamada M."/>
            <person name="Tabata S."/>
        </authorList>
    </citation>
    <scope>NUCLEOTIDE SEQUENCE [LARGE SCALE GENOMIC DNA]</scope>
    <source>
        <strain>NIES-2133 / IAM M-273 / BP-1</strain>
    </source>
</reference>
<evidence type="ECO:0000255" key="1">
    <source>
        <dbReference type="HAMAP-Rule" id="MF_01324"/>
    </source>
</evidence>
<evidence type="ECO:0000256" key="2">
    <source>
        <dbReference type="SAM" id="MobiDB-lite"/>
    </source>
</evidence>
<evidence type="ECO:0007829" key="3">
    <source>
        <dbReference type="PDB" id="8EMB"/>
    </source>
</evidence>